<keyword id="KW-0028">Amino-acid biosynthesis</keyword>
<keyword id="KW-0055">Arginine biosynthesis</keyword>
<keyword id="KW-0067">ATP-binding</keyword>
<keyword id="KW-0315">Glutamine amidotransferase</keyword>
<keyword id="KW-0436">Ligase</keyword>
<keyword id="KW-0547">Nucleotide-binding</keyword>
<keyword id="KW-0665">Pyrimidine biosynthesis</keyword>
<proteinExistence type="inferred from homology"/>
<dbReference type="EC" id="6.3.5.5" evidence="1"/>
<dbReference type="EMBL" id="AL157959">
    <property type="protein sequence ID" value="CAM07875.1"/>
    <property type="molecule type" value="Genomic_DNA"/>
</dbReference>
<dbReference type="PIR" id="D81980">
    <property type="entry name" value="D81980"/>
</dbReference>
<dbReference type="RefSeq" id="WP_002223013.1">
    <property type="nucleotide sequence ID" value="NC_003116.1"/>
</dbReference>
<dbReference type="SMR" id="Q9JVZ6"/>
<dbReference type="EnsemblBacteria" id="CAM07875">
    <property type="protein sequence ID" value="CAM07875"/>
    <property type="gene ID" value="NMA0608"/>
</dbReference>
<dbReference type="KEGG" id="nma:NMA0608"/>
<dbReference type="HOGENOM" id="CLU_035901_2_1_4"/>
<dbReference type="UniPathway" id="UPA00068">
    <property type="reaction ID" value="UER00171"/>
</dbReference>
<dbReference type="UniPathway" id="UPA00070">
    <property type="reaction ID" value="UER00115"/>
</dbReference>
<dbReference type="Proteomes" id="UP000000626">
    <property type="component" value="Chromosome"/>
</dbReference>
<dbReference type="GO" id="GO:0005524">
    <property type="term" value="F:ATP binding"/>
    <property type="evidence" value="ECO:0007669"/>
    <property type="project" value="UniProtKB-UniRule"/>
</dbReference>
<dbReference type="GO" id="GO:0004088">
    <property type="term" value="F:carbamoyl-phosphate synthase (glutamine-hydrolyzing) activity"/>
    <property type="evidence" value="ECO:0007669"/>
    <property type="project" value="UniProtKB-UniRule"/>
</dbReference>
<dbReference type="GO" id="GO:0004359">
    <property type="term" value="F:glutaminase activity"/>
    <property type="evidence" value="ECO:0007669"/>
    <property type="project" value="RHEA"/>
</dbReference>
<dbReference type="GO" id="GO:0006207">
    <property type="term" value="P:'de novo' pyrimidine nucleobase biosynthetic process"/>
    <property type="evidence" value="ECO:0007669"/>
    <property type="project" value="InterPro"/>
</dbReference>
<dbReference type="GO" id="GO:0044205">
    <property type="term" value="P:'de novo' UMP biosynthetic process"/>
    <property type="evidence" value="ECO:0007669"/>
    <property type="project" value="UniProtKB-UniRule"/>
</dbReference>
<dbReference type="GO" id="GO:0006541">
    <property type="term" value="P:glutamine metabolic process"/>
    <property type="evidence" value="ECO:0007669"/>
    <property type="project" value="InterPro"/>
</dbReference>
<dbReference type="GO" id="GO:0006526">
    <property type="term" value="P:L-arginine biosynthetic process"/>
    <property type="evidence" value="ECO:0007669"/>
    <property type="project" value="UniProtKB-UniRule"/>
</dbReference>
<dbReference type="CDD" id="cd01744">
    <property type="entry name" value="GATase1_CPSase"/>
    <property type="match status" value="1"/>
</dbReference>
<dbReference type="FunFam" id="3.40.50.880:FF:000011">
    <property type="entry name" value="Carbamoyl-phosphate synthase small chain"/>
    <property type="match status" value="1"/>
</dbReference>
<dbReference type="FunFam" id="3.50.30.20:FF:000001">
    <property type="entry name" value="Carbamoyl-phosphate synthase small chain"/>
    <property type="match status" value="1"/>
</dbReference>
<dbReference type="Gene3D" id="3.40.50.880">
    <property type="match status" value="1"/>
</dbReference>
<dbReference type="Gene3D" id="3.50.30.20">
    <property type="entry name" value="Carbamoyl-phosphate synthase small subunit, N-terminal domain"/>
    <property type="match status" value="1"/>
</dbReference>
<dbReference type="HAMAP" id="MF_01209">
    <property type="entry name" value="CPSase_S_chain"/>
    <property type="match status" value="1"/>
</dbReference>
<dbReference type="InterPro" id="IPR050472">
    <property type="entry name" value="Anth_synth/Amidotransfase"/>
</dbReference>
<dbReference type="InterPro" id="IPR006274">
    <property type="entry name" value="CarbamoylP_synth_ssu"/>
</dbReference>
<dbReference type="InterPro" id="IPR002474">
    <property type="entry name" value="CarbamoylP_synth_ssu_N"/>
</dbReference>
<dbReference type="InterPro" id="IPR036480">
    <property type="entry name" value="CarbP_synth_ssu_N_sf"/>
</dbReference>
<dbReference type="InterPro" id="IPR029062">
    <property type="entry name" value="Class_I_gatase-like"/>
</dbReference>
<dbReference type="InterPro" id="IPR035686">
    <property type="entry name" value="CPSase_GATase1"/>
</dbReference>
<dbReference type="InterPro" id="IPR017926">
    <property type="entry name" value="GATASE"/>
</dbReference>
<dbReference type="NCBIfam" id="TIGR01368">
    <property type="entry name" value="CPSaseIIsmall"/>
    <property type="match status" value="1"/>
</dbReference>
<dbReference type="NCBIfam" id="NF009475">
    <property type="entry name" value="PRK12838.1"/>
    <property type="match status" value="1"/>
</dbReference>
<dbReference type="PANTHER" id="PTHR43418:SF7">
    <property type="entry name" value="CARBAMOYL-PHOSPHATE SYNTHASE SMALL CHAIN"/>
    <property type="match status" value="1"/>
</dbReference>
<dbReference type="PANTHER" id="PTHR43418">
    <property type="entry name" value="MULTIFUNCTIONAL TRYPTOPHAN BIOSYNTHESIS PROTEIN-RELATED"/>
    <property type="match status" value="1"/>
</dbReference>
<dbReference type="Pfam" id="PF00988">
    <property type="entry name" value="CPSase_sm_chain"/>
    <property type="match status" value="1"/>
</dbReference>
<dbReference type="Pfam" id="PF00117">
    <property type="entry name" value="GATase"/>
    <property type="match status" value="1"/>
</dbReference>
<dbReference type="PRINTS" id="PR00099">
    <property type="entry name" value="CPSGATASE"/>
</dbReference>
<dbReference type="PRINTS" id="PR00096">
    <property type="entry name" value="GATASE"/>
</dbReference>
<dbReference type="SMART" id="SM01097">
    <property type="entry name" value="CPSase_sm_chain"/>
    <property type="match status" value="1"/>
</dbReference>
<dbReference type="SUPFAM" id="SSF52021">
    <property type="entry name" value="Carbamoyl phosphate synthetase, small subunit N-terminal domain"/>
    <property type="match status" value="1"/>
</dbReference>
<dbReference type="SUPFAM" id="SSF52317">
    <property type="entry name" value="Class I glutamine amidotransferase-like"/>
    <property type="match status" value="1"/>
</dbReference>
<dbReference type="PROSITE" id="PS51273">
    <property type="entry name" value="GATASE_TYPE_1"/>
    <property type="match status" value="1"/>
</dbReference>
<gene>
    <name evidence="1" type="primary">carA</name>
    <name type="ordered locus">NMA0608</name>
</gene>
<comment type="function">
    <text evidence="1">Small subunit of the glutamine-dependent carbamoyl phosphate synthetase (CPSase). CPSase catalyzes the formation of carbamoyl phosphate from the ammonia moiety of glutamine, carbonate, and phosphate donated by ATP, constituting the first step of 2 biosynthetic pathways, one leading to arginine and/or urea and the other to pyrimidine nucleotides. The small subunit (glutamine amidotransferase) binds and cleaves glutamine to supply the large subunit with the substrate ammonia.</text>
</comment>
<comment type="catalytic activity">
    <reaction evidence="1">
        <text>hydrogencarbonate + L-glutamine + 2 ATP + H2O = carbamoyl phosphate + L-glutamate + 2 ADP + phosphate + 2 H(+)</text>
        <dbReference type="Rhea" id="RHEA:18633"/>
        <dbReference type="ChEBI" id="CHEBI:15377"/>
        <dbReference type="ChEBI" id="CHEBI:15378"/>
        <dbReference type="ChEBI" id="CHEBI:17544"/>
        <dbReference type="ChEBI" id="CHEBI:29985"/>
        <dbReference type="ChEBI" id="CHEBI:30616"/>
        <dbReference type="ChEBI" id="CHEBI:43474"/>
        <dbReference type="ChEBI" id="CHEBI:58228"/>
        <dbReference type="ChEBI" id="CHEBI:58359"/>
        <dbReference type="ChEBI" id="CHEBI:456216"/>
        <dbReference type="EC" id="6.3.5.5"/>
    </reaction>
</comment>
<comment type="catalytic activity">
    <molecule>Carbamoyl phosphate synthase small chain</molecule>
    <reaction evidence="1">
        <text>L-glutamine + H2O = L-glutamate + NH4(+)</text>
        <dbReference type="Rhea" id="RHEA:15889"/>
        <dbReference type="ChEBI" id="CHEBI:15377"/>
        <dbReference type="ChEBI" id="CHEBI:28938"/>
        <dbReference type="ChEBI" id="CHEBI:29985"/>
        <dbReference type="ChEBI" id="CHEBI:58359"/>
    </reaction>
</comment>
<comment type="pathway">
    <text evidence="1">Amino-acid biosynthesis; L-arginine biosynthesis; carbamoyl phosphate from bicarbonate: step 1/1.</text>
</comment>
<comment type="pathway">
    <text evidence="1">Pyrimidine metabolism; UMP biosynthesis via de novo pathway; (S)-dihydroorotate from bicarbonate: step 1/3.</text>
</comment>
<comment type="subunit">
    <text evidence="1">Composed of two chains; the small (or glutamine) chain promotes the hydrolysis of glutamine to ammonia, which is used by the large (or ammonia) chain to synthesize carbamoyl phosphate. Tetramer of heterodimers (alpha,beta)4.</text>
</comment>
<comment type="similarity">
    <text evidence="1">Belongs to the CarA family.</text>
</comment>
<reference key="1">
    <citation type="journal article" date="2000" name="Nature">
        <title>Complete DNA sequence of a serogroup A strain of Neisseria meningitidis Z2491.</title>
        <authorList>
            <person name="Parkhill J."/>
            <person name="Achtman M."/>
            <person name="James K.D."/>
            <person name="Bentley S.D."/>
            <person name="Churcher C.M."/>
            <person name="Klee S.R."/>
            <person name="Morelli G."/>
            <person name="Basham D."/>
            <person name="Brown D."/>
            <person name="Chillingworth T."/>
            <person name="Davies R.M."/>
            <person name="Davis P."/>
            <person name="Devlin K."/>
            <person name="Feltwell T."/>
            <person name="Hamlin N."/>
            <person name="Holroyd S."/>
            <person name="Jagels K."/>
            <person name="Leather S."/>
            <person name="Moule S."/>
            <person name="Mungall K.L."/>
            <person name="Quail M.A."/>
            <person name="Rajandream M.A."/>
            <person name="Rutherford K.M."/>
            <person name="Simmonds M."/>
            <person name="Skelton J."/>
            <person name="Whitehead S."/>
            <person name="Spratt B.G."/>
            <person name="Barrell B.G."/>
        </authorList>
    </citation>
    <scope>NUCLEOTIDE SEQUENCE [LARGE SCALE GENOMIC DNA]</scope>
    <source>
        <strain>DSM 15465 / Z2491</strain>
    </source>
</reference>
<organism>
    <name type="scientific">Neisseria meningitidis serogroup A / serotype 4A (strain DSM 15465 / Z2491)</name>
    <dbReference type="NCBI Taxonomy" id="122587"/>
    <lineage>
        <taxon>Bacteria</taxon>
        <taxon>Pseudomonadati</taxon>
        <taxon>Pseudomonadota</taxon>
        <taxon>Betaproteobacteria</taxon>
        <taxon>Neisseriales</taxon>
        <taxon>Neisseriaceae</taxon>
        <taxon>Neisseria</taxon>
    </lineage>
</organism>
<evidence type="ECO:0000255" key="1">
    <source>
        <dbReference type="HAMAP-Rule" id="MF_01209"/>
    </source>
</evidence>
<accession>Q9JVZ6</accession>
<accession>A1IQ49</accession>
<feature type="chain" id="PRO_0000112298" description="Carbamoyl phosphate synthase small chain">
    <location>
        <begin position="1"/>
        <end position="377"/>
    </location>
</feature>
<feature type="domain" description="Glutamine amidotransferase type-1" evidence="1">
    <location>
        <begin position="190"/>
        <end position="377"/>
    </location>
</feature>
<feature type="region of interest" description="CPSase" evidence="1">
    <location>
        <begin position="1"/>
        <end position="186"/>
    </location>
</feature>
<feature type="active site" description="Nucleophile" evidence="1">
    <location>
        <position position="266"/>
    </location>
</feature>
<feature type="active site" evidence="1">
    <location>
        <position position="350"/>
    </location>
</feature>
<feature type="active site" evidence="1">
    <location>
        <position position="352"/>
    </location>
</feature>
<feature type="binding site" evidence="1">
    <location>
        <position position="47"/>
    </location>
    <ligand>
        <name>L-glutamine</name>
        <dbReference type="ChEBI" id="CHEBI:58359"/>
    </ligand>
</feature>
<feature type="binding site" evidence="1">
    <location>
        <position position="238"/>
    </location>
    <ligand>
        <name>L-glutamine</name>
        <dbReference type="ChEBI" id="CHEBI:58359"/>
    </ligand>
</feature>
<feature type="binding site" evidence="1">
    <location>
        <position position="240"/>
    </location>
    <ligand>
        <name>L-glutamine</name>
        <dbReference type="ChEBI" id="CHEBI:58359"/>
    </ligand>
</feature>
<feature type="binding site" evidence="1">
    <location>
        <position position="267"/>
    </location>
    <ligand>
        <name>L-glutamine</name>
        <dbReference type="ChEBI" id="CHEBI:58359"/>
    </ligand>
</feature>
<feature type="binding site" evidence="1">
    <location>
        <position position="270"/>
    </location>
    <ligand>
        <name>L-glutamine</name>
        <dbReference type="ChEBI" id="CHEBI:58359"/>
    </ligand>
</feature>
<feature type="binding site" evidence="1">
    <location>
        <position position="308"/>
    </location>
    <ligand>
        <name>L-glutamine</name>
        <dbReference type="ChEBI" id="CHEBI:58359"/>
    </ligand>
</feature>
<feature type="binding site" evidence="1">
    <location>
        <position position="310"/>
    </location>
    <ligand>
        <name>L-glutamine</name>
        <dbReference type="ChEBI" id="CHEBI:58359"/>
    </ligand>
</feature>
<feature type="binding site" evidence="1">
    <location>
        <position position="311"/>
    </location>
    <ligand>
        <name>L-glutamine</name>
        <dbReference type="ChEBI" id="CHEBI:58359"/>
    </ligand>
</feature>
<protein>
    <recommendedName>
        <fullName evidence="1">Carbamoyl phosphate synthase small chain</fullName>
        <ecNumber evidence="1">6.3.5.5</ecNumber>
    </recommendedName>
    <alternativeName>
        <fullName evidence="1">Carbamoyl phosphate synthetase glutamine chain</fullName>
    </alternativeName>
</protein>
<name>CARA_NEIMA</name>
<sequence length="377" mass="40605">MSTPALLVLADGSVFHGTSIGYEGSTSGEVVFNTSMTGYQEILTDPSYCKQIVTLTYPHIGNTGTNAEDEESRSVYAAGLIIRDLPLLHSNFRASESLHDYLVRNKTVAIADIDTRRLTTLLREKGAQGGAILTGADATIEKAQELIAAFGSMVGKDLAKEVSCTETYEWTEGEWALGKGFVTPDEQPYHVVAYDFGVKTNILRMLASRGCRLTVVPAQTSAQDVLALNPDGVFLSNGPGDPEPCTYAIEAVQKLMESGKPIFGICLGHQLISLAIGAKTLKMRFSHHGANHPVQDLDSGKVVITSQNHGFAVDADTLPANARITHKSLFDNTLQGIELTDKPVFCFQGHPEASPGPQDVGYLFDKFIGNMKAAKRA</sequence>